<comment type="function">
    <text evidence="1">Involved in the degradation of chitin. ChbG is essential for growth on the acetylated chitooligosaccharides chitobiose and chitotriose but is dispensable for growth on cellobiose and chitosan dimer, the deacetylated form of chitobiose. Deacetylation of chitobiose-6-P and chitotriose-6-P is necessary for both the activation of the chb promoter by the regulatory protein ChbR and the hydrolysis of phosphorylated beta-glucosides by the phospho-beta-glucosidase ChbF. Catalyzes the removal of only one acetyl group from chitobiose-6-P to yield monoacetylchitobiose-6-P, the inducer of ChbR and the substrate of ChbF.</text>
</comment>
<comment type="catalytic activity">
    <reaction evidence="1">
        <text>N,N'-diacetylchitobiose + H2O = N-acetyl-beta-D-glucosaminyl-(1-&gt;4)-D-glucosamine + acetate</text>
        <dbReference type="Rhea" id="RHEA:27469"/>
        <dbReference type="ChEBI" id="CHEBI:15377"/>
        <dbReference type="ChEBI" id="CHEBI:28681"/>
        <dbReference type="ChEBI" id="CHEBI:30089"/>
        <dbReference type="ChEBI" id="CHEBI:59910"/>
        <dbReference type="EC" id="3.5.1.105"/>
    </reaction>
</comment>
<comment type="catalytic activity">
    <reaction evidence="1">
        <text>diacetylchitobiose-6'-phosphate + H2O = N'-monoacetylchitobiose-6'-phosphate + acetate</text>
        <dbReference type="Rhea" id="RHEA:35083"/>
        <dbReference type="ChEBI" id="CHEBI:15377"/>
        <dbReference type="ChEBI" id="CHEBI:30089"/>
        <dbReference type="ChEBI" id="CHEBI:64883"/>
        <dbReference type="ChEBI" id="CHEBI:71315"/>
    </reaction>
</comment>
<comment type="cofactor">
    <cofactor evidence="1">
        <name>Mg(2+)</name>
        <dbReference type="ChEBI" id="CHEBI:18420"/>
    </cofactor>
</comment>
<comment type="pathway">
    <text evidence="1">Glycan degradation; chitin degradation.</text>
</comment>
<comment type="subunit">
    <text evidence="1">Homodimer.</text>
</comment>
<comment type="subcellular location">
    <subcellularLocation>
        <location evidence="1">Cytoplasm</location>
    </subcellularLocation>
</comment>
<comment type="similarity">
    <text evidence="1">Belongs to the YdjC deacetylase family. ChbG subfamily.</text>
</comment>
<name>CHBG_ECO27</name>
<protein>
    <recommendedName>
        <fullName evidence="1">Chitooligosaccharide deacetylase</fullName>
        <shortName evidence="1">COD</shortName>
        <ecNumber evidence="1">3.5.1.105</ecNumber>
    </recommendedName>
    <alternativeName>
        <fullName evidence="1">Chitin disaccharide deacetylase</fullName>
    </alternativeName>
    <alternativeName>
        <fullName evidence="1">Chitobiose deacetylase</fullName>
    </alternativeName>
    <alternativeName>
        <fullName evidence="1">Chitobiose-6P deacetylase</fullName>
    </alternativeName>
    <alternativeName>
        <fullName evidence="1">Chitotriose deacetylase</fullName>
    </alternativeName>
    <alternativeName>
        <fullName evidence="1">Chitotriose-6P deacetylase</fullName>
    </alternativeName>
</protein>
<keyword id="KW-0119">Carbohydrate metabolism</keyword>
<keyword id="KW-0146">Chitin degradation</keyword>
<keyword id="KW-0963">Cytoplasm</keyword>
<keyword id="KW-0378">Hydrolase</keyword>
<keyword id="KW-0460">Magnesium</keyword>
<keyword id="KW-0479">Metal-binding</keyword>
<keyword id="KW-0624">Polysaccharide degradation</keyword>
<keyword id="KW-1185">Reference proteome</keyword>
<organism>
    <name type="scientific">Escherichia coli O127:H6 (strain E2348/69 / EPEC)</name>
    <dbReference type="NCBI Taxonomy" id="574521"/>
    <lineage>
        <taxon>Bacteria</taxon>
        <taxon>Pseudomonadati</taxon>
        <taxon>Pseudomonadota</taxon>
        <taxon>Gammaproteobacteria</taxon>
        <taxon>Enterobacterales</taxon>
        <taxon>Enterobacteriaceae</taxon>
        <taxon>Escherichia</taxon>
    </lineage>
</organism>
<reference key="1">
    <citation type="journal article" date="2009" name="J. Bacteriol.">
        <title>Complete genome sequence and comparative genome analysis of enteropathogenic Escherichia coli O127:H6 strain E2348/69.</title>
        <authorList>
            <person name="Iguchi A."/>
            <person name="Thomson N.R."/>
            <person name="Ogura Y."/>
            <person name="Saunders D."/>
            <person name="Ooka T."/>
            <person name="Henderson I.R."/>
            <person name="Harris D."/>
            <person name="Asadulghani M."/>
            <person name="Kurokawa K."/>
            <person name="Dean P."/>
            <person name="Kenny B."/>
            <person name="Quail M.A."/>
            <person name="Thurston S."/>
            <person name="Dougan G."/>
            <person name="Hayashi T."/>
            <person name="Parkhill J."/>
            <person name="Frankel G."/>
        </authorList>
    </citation>
    <scope>NUCLEOTIDE SEQUENCE [LARGE SCALE GENOMIC DNA]</scope>
    <source>
        <strain>E2348/69 / EPEC</strain>
    </source>
</reference>
<gene>
    <name evidence="1" type="primary">chbG</name>
    <name type="ordered locus">E2348C_1861</name>
</gene>
<dbReference type="EC" id="3.5.1.105" evidence="1"/>
<dbReference type="EMBL" id="FM180568">
    <property type="protein sequence ID" value="CAS09409.1"/>
    <property type="molecule type" value="Genomic_DNA"/>
</dbReference>
<dbReference type="RefSeq" id="WP_000440478.1">
    <property type="nucleotide sequence ID" value="NC_011601.1"/>
</dbReference>
<dbReference type="SMR" id="B7USB4"/>
<dbReference type="KEGG" id="ecg:E2348C_1861"/>
<dbReference type="HOGENOM" id="CLU_064244_4_1_6"/>
<dbReference type="UniPathway" id="UPA00349"/>
<dbReference type="Proteomes" id="UP000008205">
    <property type="component" value="Chromosome"/>
</dbReference>
<dbReference type="GO" id="GO:0005737">
    <property type="term" value="C:cytoplasm"/>
    <property type="evidence" value="ECO:0007669"/>
    <property type="project" value="UniProtKB-SubCell"/>
</dbReference>
<dbReference type="GO" id="GO:0036311">
    <property type="term" value="F:chitin disaccharide deacetylase activity"/>
    <property type="evidence" value="ECO:0007669"/>
    <property type="project" value="UniProtKB-UniRule"/>
</dbReference>
<dbReference type="GO" id="GO:0019213">
    <property type="term" value="F:deacetylase activity"/>
    <property type="evidence" value="ECO:0007669"/>
    <property type="project" value="TreeGrafter"/>
</dbReference>
<dbReference type="GO" id="GO:0046872">
    <property type="term" value="F:metal ion binding"/>
    <property type="evidence" value="ECO:0007669"/>
    <property type="project" value="UniProtKB-KW"/>
</dbReference>
<dbReference type="GO" id="GO:0006032">
    <property type="term" value="P:chitin catabolic process"/>
    <property type="evidence" value="ECO:0007669"/>
    <property type="project" value="UniProtKB-UniPathway"/>
</dbReference>
<dbReference type="GO" id="GO:0052777">
    <property type="term" value="P:diacetylchitobiose catabolic process"/>
    <property type="evidence" value="ECO:0007669"/>
    <property type="project" value="UniProtKB-UniRule"/>
</dbReference>
<dbReference type="GO" id="GO:0000272">
    <property type="term" value="P:polysaccharide catabolic process"/>
    <property type="evidence" value="ECO:0007669"/>
    <property type="project" value="UniProtKB-UniRule"/>
</dbReference>
<dbReference type="CDD" id="cd10803">
    <property type="entry name" value="YdjC_EF3048_like"/>
    <property type="match status" value="1"/>
</dbReference>
<dbReference type="FunFam" id="3.20.20.370:FF:000001">
    <property type="entry name" value="Chitooligosaccharide deacetylase"/>
    <property type="match status" value="1"/>
</dbReference>
<dbReference type="Gene3D" id="3.20.20.370">
    <property type="entry name" value="Glycoside hydrolase/deacetylase"/>
    <property type="match status" value="1"/>
</dbReference>
<dbReference type="HAMAP" id="MF_01246">
    <property type="entry name" value="COD"/>
    <property type="match status" value="1"/>
</dbReference>
<dbReference type="InterPro" id="IPR022948">
    <property type="entry name" value="COD_ChbG_bac"/>
</dbReference>
<dbReference type="InterPro" id="IPR011330">
    <property type="entry name" value="Glyco_hydro/deAcase_b/a-brl"/>
</dbReference>
<dbReference type="InterPro" id="IPR006879">
    <property type="entry name" value="YdjC-like"/>
</dbReference>
<dbReference type="NCBIfam" id="NF002559">
    <property type="entry name" value="PRK02134.1"/>
    <property type="match status" value="1"/>
</dbReference>
<dbReference type="PANTHER" id="PTHR31609:SF1">
    <property type="entry name" value="CARBOHYDRATE DEACETYLASE"/>
    <property type="match status" value="1"/>
</dbReference>
<dbReference type="PANTHER" id="PTHR31609">
    <property type="entry name" value="YDJC DEACETYLASE FAMILY MEMBER"/>
    <property type="match status" value="1"/>
</dbReference>
<dbReference type="Pfam" id="PF04794">
    <property type="entry name" value="YdjC"/>
    <property type="match status" value="1"/>
</dbReference>
<dbReference type="SUPFAM" id="SSF88713">
    <property type="entry name" value="Glycoside hydrolase/deacetylase"/>
    <property type="match status" value="1"/>
</dbReference>
<sequence>MERLLIVNADDFGLSKGQNYGIIEACRNGIVTSTTALVNGQAIDHAVQLSRDEPSLAIGMHFVLTMGKPLTVMPGLTRDGVLGKWIWQLAEEDALPLEEITQELASQYLRFIELFGRKPTHLDSHHHVHMFPQIFPIVAKFAAEEGIALRIDRQPLSNDGDLPANLRSSQGFSSAFYGEEISETLFLQVLDDSSHRGERSLEVMCHPAFVDNTIRQSAYCFPRLTELDVLTSASLKYAIAERGYLLGSYHDV</sequence>
<proteinExistence type="inferred from homology"/>
<feature type="chain" id="PRO_1000165045" description="Chitooligosaccharide deacetylase">
    <location>
        <begin position="1"/>
        <end position="252"/>
    </location>
</feature>
<feature type="binding site" evidence="1">
    <location>
        <position position="61"/>
    </location>
    <ligand>
        <name>Mg(2+)</name>
        <dbReference type="ChEBI" id="CHEBI:18420"/>
    </ligand>
</feature>
<feature type="binding site" evidence="1">
    <location>
        <position position="125"/>
    </location>
    <ligand>
        <name>Mg(2+)</name>
        <dbReference type="ChEBI" id="CHEBI:18420"/>
    </ligand>
</feature>
<evidence type="ECO:0000255" key="1">
    <source>
        <dbReference type="HAMAP-Rule" id="MF_01246"/>
    </source>
</evidence>
<accession>B7USB4</accession>